<comment type="similarity">
    <text evidence="1">Belongs to the UPF0158 family.</text>
</comment>
<gene>
    <name type="ordered locus">CPn_0518</name>
    <name type="ordered locus">CP_0235</name>
    <name type="ordered locus">CPj0518</name>
    <name type="ordered locus">CpB0539</name>
</gene>
<sequence>MMTYPVPQNPLLLRILRLMDAFSKSDDERDFYLDRVEGFILYIDLDKDQEDLNKIYQELEENAERYCLIPKLTFYEVKKIMETFINEKIYDIDTKEKFLEILQSKNAREQFLEFIYDHEAELEKWQQFYVERSRIRIIEWLRNNKFHFVFEEDLDFTKNVLEQLKIHLFDAKVGKEITQARQLLSNKAKIYYSNEALNPRPKRGRPPKQSAKVETETTISSDIYTKVPQAARRFLFLPEITSPSSITFSEKFDTEEEFLANLRGSTRVEDQLNLTNLSERFASLKELSAKLGYDSLSTGDFFGDDDEKVVTKTKGSKRGRKKSS</sequence>
<dbReference type="EMBL" id="AE001363">
    <property type="protein sequence ID" value="AAD18658.1"/>
    <property type="molecule type" value="Genomic_DNA"/>
</dbReference>
<dbReference type="EMBL" id="AE002161">
    <property type="protein sequence ID" value="AAF38100.1"/>
    <property type="molecule type" value="Genomic_DNA"/>
</dbReference>
<dbReference type="EMBL" id="BA000008">
    <property type="protein sequence ID" value="BAA98724.1"/>
    <property type="molecule type" value="Genomic_DNA"/>
</dbReference>
<dbReference type="EMBL" id="AE009440">
    <property type="protein sequence ID" value="AAP98468.1"/>
    <property type="molecule type" value="Genomic_DNA"/>
</dbReference>
<dbReference type="PIR" id="B86555">
    <property type="entry name" value="B86555"/>
</dbReference>
<dbReference type="PIR" id="D72070">
    <property type="entry name" value="D72070"/>
</dbReference>
<dbReference type="RefSeq" id="NP_224714.1">
    <property type="nucleotide sequence ID" value="NC_000922.1"/>
</dbReference>
<dbReference type="RefSeq" id="WP_010883156.1">
    <property type="nucleotide sequence ID" value="NZ_LN847257.1"/>
</dbReference>
<dbReference type="STRING" id="406984.CPK_ORF01032"/>
<dbReference type="GeneID" id="45050560"/>
<dbReference type="KEGG" id="cpa:CP_0235"/>
<dbReference type="KEGG" id="cpj:CPj0518"/>
<dbReference type="KEGG" id="cpn:CPn_0518"/>
<dbReference type="KEGG" id="cpt:CpB0539"/>
<dbReference type="PATRIC" id="fig|115713.3.peg.577"/>
<dbReference type="eggNOG" id="ENOG502Z9VH">
    <property type="taxonomic scope" value="Bacteria"/>
</dbReference>
<dbReference type="HOGENOM" id="CLU_849148_0_0_0"/>
<dbReference type="OrthoDB" id="17355at2"/>
<dbReference type="Proteomes" id="UP000000583">
    <property type="component" value="Chromosome"/>
</dbReference>
<dbReference type="Proteomes" id="UP000000801">
    <property type="component" value="Chromosome"/>
</dbReference>
<dbReference type="InterPro" id="IPR005361">
    <property type="entry name" value="UPF0158"/>
</dbReference>
<dbReference type="Pfam" id="PF03682">
    <property type="entry name" value="UPF0158"/>
    <property type="match status" value="1"/>
</dbReference>
<feature type="chain" id="PRO_0000220647" description="UPF0158 protein CPn_0518/CP_0235/CPj0518/CpB0539">
    <location>
        <begin position="1"/>
        <end position="324"/>
    </location>
</feature>
<name>Y518_CHLPN</name>
<proteinExistence type="inferred from homology"/>
<evidence type="ECO:0000305" key="1"/>
<reference key="1">
    <citation type="journal article" date="1999" name="Nat. Genet.">
        <title>Comparative genomes of Chlamydia pneumoniae and C. trachomatis.</title>
        <authorList>
            <person name="Kalman S."/>
            <person name="Mitchell W.P."/>
            <person name="Marathe R."/>
            <person name="Lammel C.J."/>
            <person name="Fan J."/>
            <person name="Hyman R.W."/>
            <person name="Olinger L."/>
            <person name="Grimwood J."/>
            <person name="Davis R.W."/>
            <person name="Stephens R.S."/>
        </authorList>
    </citation>
    <scope>NUCLEOTIDE SEQUENCE [LARGE SCALE GENOMIC DNA]</scope>
    <source>
        <strain>CWL029</strain>
    </source>
</reference>
<reference key="2">
    <citation type="journal article" date="2000" name="Nucleic Acids Res.">
        <title>Genome sequences of Chlamydia trachomatis MoPn and Chlamydia pneumoniae AR39.</title>
        <authorList>
            <person name="Read T.D."/>
            <person name="Brunham R.C."/>
            <person name="Shen C."/>
            <person name="Gill S.R."/>
            <person name="Heidelberg J.F."/>
            <person name="White O."/>
            <person name="Hickey E.K."/>
            <person name="Peterson J.D."/>
            <person name="Utterback T.R."/>
            <person name="Berry K.J."/>
            <person name="Bass S."/>
            <person name="Linher K.D."/>
            <person name="Weidman J.F."/>
            <person name="Khouri H.M."/>
            <person name="Craven B."/>
            <person name="Bowman C."/>
            <person name="Dodson R.J."/>
            <person name="Gwinn M.L."/>
            <person name="Nelson W.C."/>
            <person name="DeBoy R.T."/>
            <person name="Kolonay J.F."/>
            <person name="McClarty G."/>
            <person name="Salzberg S.L."/>
            <person name="Eisen J.A."/>
            <person name="Fraser C.M."/>
        </authorList>
    </citation>
    <scope>NUCLEOTIDE SEQUENCE [LARGE SCALE GENOMIC DNA]</scope>
    <source>
        <strain>AR39</strain>
    </source>
</reference>
<reference key="3">
    <citation type="journal article" date="2000" name="Nucleic Acids Res.">
        <title>Comparison of whole genome sequences of Chlamydia pneumoniae J138 from Japan and CWL029 from USA.</title>
        <authorList>
            <person name="Shirai M."/>
            <person name="Hirakawa H."/>
            <person name="Kimoto M."/>
            <person name="Tabuchi M."/>
            <person name="Kishi F."/>
            <person name="Ouchi K."/>
            <person name="Shiba T."/>
            <person name="Ishii K."/>
            <person name="Hattori M."/>
            <person name="Kuhara S."/>
            <person name="Nakazawa T."/>
        </authorList>
    </citation>
    <scope>NUCLEOTIDE SEQUENCE [LARGE SCALE GENOMIC DNA]</scope>
    <source>
        <strain>J138</strain>
    </source>
</reference>
<reference key="4">
    <citation type="submission" date="2002-05" db="EMBL/GenBank/DDBJ databases">
        <title>The genome sequence of Chlamydia pneumoniae TW183 and comparison with other Chlamydia strains based on whole genome sequence analysis.</title>
        <authorList>
            <person name="Geng M.M."/>
            <person name="Schuhmacher A."/>
            <person name="Muehldorfer I."/>
            <person name="Bensch K.W."/>
            <person name="Schaefer K.P."/>
            <person name="Schneider S."/>
            <person name="Pohl T."/>
            <person name="Essig A."/>
            <person name="Marre R."/>
            <person name="Melchers K."/>
        </authorList>
    </citation>
    <scope>NUCLEOTIDE SEQUENCE [LARGE SCALE GENOMIC DNA]</scope>
    <source>
        <strain>TW-183</strain>
    </source>
</reference>
<organism>
    <name type="scientific">Chlamydia pneumoniae</name>
    <name type="common">Chlamydophila pneumoniae</name>
    <dbReference type="NCBI Taxonomy" id="83558"/>
    <lineage>
        <taxon>Bacteria</taxon>
        <taxon>Pseudomonadati</taxon>
        <taxon>Chlamydiota</taxon>
        <taxon>Chlamydiia</taxon>
        <taxon>Chlamydiales</taxon>
        <taxon>Chlamydiaceae</taxon>
        <taxon>Chlamydia/Chlamydophila group</taxon>
        <taxon>Chlamydia</taxon>
    </lineage>
</organism>
<protein>
    <recommendedName>
        <fullName>UPF0158 protein CPn_0518/CP_0235/CPj0518/CpB0539</fullName>
    </recommendedName>
</protein>
<accession>Q9Z834</accession>